<comment type="function">
    <text evidence="6">Functions to regulate alternative splicing in neurons by binding pre-mRNA in a sequence-specific manner to activate exon inclusion or exclusion. It binds specifically to the sequences 5'-YCAY-3' and regulates splicing in only a subset of regulated exons. Binding to an exonic 5'-YCAY-3' cluster changes the protein complexes assembled on pre-mRNA, blocking U1 snRNP binding and exon inclusion, whereas binding to an intronic 5'-YCAY-3' cluster enhances spliceosome assembly and exon inclusion (PubMed:12124753). Binding to 5'-YCAY-3' clusters results in a local and asymmetric action to regulate spliceosome assembly and alternative splicing in neurons. Binding to an exonic 5'-YCAY-3' cluster changed the protein complexes assembled on pre-mRNA, blocking U1 snRNP (small nuclear ribonucleoprotein) binding and exon inclusion, whereas binding to an intronic 5'-YCAY-3' cluster enhanced spliceosome assembly and exon inclusion. With NOVA1, they perform unique biological functions in different brain areas and cell types. Autoregulates its own expression by acting as a splicing repressor. Acts to activate the inclusion of exon E3A in the glycine receptor alpha-2 chain and of exon E9 in gamma-aminobutyric-acid receptor gamma-2 subunit via a distal downstream UCAU-rich intronic splicing enhancer. Acts to regulate a novel glycine receptor alpha-2 chain splice variant (alpha-2N) in developing spinal cord.</text>
</comment>
<comment type="subunit">
    <text evidence="2">Interacts with PTBP2; the interaction is direct.</text>
</comment>
<comment type="subcellular location">
    <subcellularLocation>
        <location evidence="2">Nucleus</location>
    </subcellularLocation>
</comment>
<comment type="domain">
    <text evidence="1">The KH domain consists of approximately 70 amino acids and includes a conserved hydrophobic core, an invariant Gly-X-X-Gly motif, and an additional variable segment. The third KH domain (KH3) binds a hairpin RNA loop containing the 5'-UCAY-3' motif on targeted molecules. RNA binding by KH3 requires residues C-terminal to the KH domain.</text>
</comment>
<reference key="1">
    <citation type="submission" date="2003-03" db="EMBL/GenBank/DDBJ databases">
        <title>Nova-1, the paraneoplastic Ri antigen, is associated with breast cancer.</title>
        <authorList>
            <person name="Knudsen A."/>
            <person name="Monstad S.E."/>
            <person name="Vedeler C.A."/>
        </authorList>
    </citation>
    <scope>NUCLEOTIDE SEQUENCE [MRNA]</scope>
    <source>
        <strain>BDIX</strain>
        <tissue>Cerebellum</tissue>
    </source>
</reference>
<reference key="2">
    <citation type="journal article" date="2002" name="J. Neurobiol.">
        <title>Role of Nova-1 in regulating alpha2N, a novel glycine receptor splice variant, in developing spinal cord neurons.</title>
        <authorList>
            <person name="Kumar D.V."/>
            <person name="Nighorn A."/>
            <person name="St John P.A."/>
        </authorList>
    </citation>
    <scope>FUNCTION</scope>
</reference>
<feature type="chain" id="PRO_0000050118" description="RNA-binding protein Nova-1">
    <location>
        <begin position="1"/>
        <end position="474" status="greater than"/>
    </location>
</feature>
<feature type="domain" description="KH 1" evidence="4">
    <location>
        <begin position="48"/>
        <end position="115"/>
    </location>
</feature>
<feature type="domain" description="KH 2" evidence="4">
    <location>
        <begin position="146"/>
        <end position="212"/>
    </location>
</feature>
<feature type="domain" description="KH 3" evidence="4">
    <location>
        <begin position="396"/>
        <end position="463"/>
    </location>
</feature>
<feature type="region of interest" description="Disordered" evidence="5">
    <location>
        <begin position="1"/>
        <end position="43"/>
    </location>
</feature>
<feature type="region of interest" description="Required for RNA binding" evidence="1">
    <location>
        <begin position="394"/>
        <end position="474"/>
    </location>
</feature>
<feature type="short sequence motif" description="Bipartite nuclear localization signal" evidence="3">
    <location>
        <begin position="26"/>
        <end position="42"/>
    </location>
</feature>
<feature type="compositionally biased region" description="Polar residues" evidence="5">
    <location>
        <begin position="1"/>
        <end position="12"/>
    </location>
</feature>
<feature type="non-terminal residue">
    <location>
        <position position="474"/>
    </location>
</feature>
<proteinExistence type="evidence at transcript level"/>
<evidence type="ECO:0000250" key="1">
    <source>
        <dbReference type="UniProtKB" id="P51513"/>
    </source>
</evidence>
<evidence type="ECO:0000250" key="2">
    <source>
        <dbReference type="UniProtKB" id="Q9JKN6"/>
    </source>
</evidence>
<evidence type="ECO:0000255" key="3"/>
<evidence type="ECO:0000255" key="4">
    <source>
        <dbReference type="PROSITE-ProRule" id="PRU00117"/>
    </source>
</evidence>
<evidence type="ECO:0000256" key="5">
    <source>
        <dbReference type="SAM" id="MobiDB-lite"/>
    </source>
</evidence>
<evidence type="ECO:0000269" key="6">
    <source>
    </source>
</evidence>
<evidence type="ECO:0000305" key="7"/>
<evidence type="ECO:0000312" key="8">
    <source>
        <dbReference type="RGD" id="621345"/>
    </source>
</evidence>
<name>NOVA1_RAT</name>
<sequence length="474" mass="48444">MAAAPIQQNGTHTGVPIDLDPPDSRKRPLEAPPEAGSTKRTNTGEDGQYFLKVLIPSYAAGSIIGKGGQTIVQLQKETGATIKLSKSKDFYPGTTERVCLIQGTIEALNAVHGFIAEKIREMPQNVAKTEPVSILQPQTTVNPDRIKQVKIIVPNSTAGLIIGKGGATVKAIMEQSGAWVQLSQKPDGINLQERVVTVSGEPEQNRKAVELIIQKIQEDPQSGSCLNISYANVTGPVANSNPTGFPYANTAEVLPTAAAAAGLLGHANLAGVAAFPAVLSGFTGNDLVAITSALNTLASYGYNLNTLGLGLSQAAATGALAAAAASANPAAAAANLLATYASEASASGSTAGGTAGTFALGSLAAATAATNGYFGAASPLAASAILGTEKSTDGSKDVVEIAVPENLVGAILGKGGKTLVEYQELTGARIQISKKGEFVPGTRNRKVTITGTPAATQAAQYLITQRITYEQGVR</sequence>
<protein>
    <recommendedName>
        <fullName evidence="7">RNA-binding protein Nova-1</fullName>
    </recommendedName>
    <alternativeName>
        <fullName>Neuro-oncological ventral antigen 1</fullName>
    </alternativeName>
</protein>
<organism>
    <name type="scientific">Rattus norvegicus</name>
    <name type="common">Rat</name>
    <dbReference type="NCBI Taxonomy" id="10116"/>
    <lineage>
        <taxon>Eukaryota</taxon>
        <taxon>Metazoa</taxon>
        <taxon>Chordata</taxon>
        <taxon>Craniata</taxon>
        <taxon>Vertebrata</taxon>
        <taxon>Euteleostomi</taxon>
        <taxon>Mammalia</taxon>
        <taxon>Eutheria</taxon>
        <taxon>Euarchontoglires</taxon>
        <taxon>Glires</taxon>
        <taxon>Rodentia</taxon>
        <taxon>Myomorpha</taxon>
        <taxon>Muroidea</taxon>
        <taxon>Muridae</taxon>
        <taxon>Murinae</taxon>
        <taxon>Rattus</taxon>
    </lineage>
</organism>
<gene>
    <name evidence="8" type="primary">Nova1</name>
</gene>
<keyword id="KW-0507">mRNA processing</keyword>
<keyword id="KW-0508">mRNA splicing</keyword>
<keyword id="KW-0524">Neurogenesis</keyword>
<keyword id="KW-0539">Nucleus</keyword>
<keyword id="KW-1185">Reference proteome</keyword>
<keyword id="KW-0677">Repeat</keyword>
<keyword id="KW-0694">RNA-binding</keyword>
<dbReference type="EMBL" id="AY262017">
    <property type="protein sequence ID" value="AAP20872.1"/>
    <property type="molecule type" value="mRNA"/>
</dbReference>
<dbReference type="SMR" id="Q80WA4"/>
<dbReference type="FunCoup" id="Q80WA4">
    <property type="interactions" value="3643"/>
</dbReference>
<dbReference type="IntAct" id="Q80WA4">
    <property type="interactions" value="2"/>
</dbReference>
<dbReference type="STRING" id="10116.ENSRNOP00000069458"/>
<dbReference type="PhosphoSitePlus" id="Q80WA4"/>
<dbReference type="jPOST" id="Q80WA4"/>
<dbReference type="PaxDb" id="10116-ENSRNOP00000045624"/>
<dbReference type="UCSC" id="RGD:621345">
    <property type="organism name" value="rat"/>
</dbReference>
<dbReference type="AGR" id="RGD:621345"/>
<dbReference type="RGD" id="621345">
    <property type="gene designation" value="Nova1"/>
</dbReference>
<dbReference type="eggNOG" id="KOG2191">
    <property type="taxonomic scope" value="Eukaryota"/>
</dbReference>
<dbReference type="InParanoid" id="Q80WA4"/>
<dbReference type="PhylomeDB" id="Q80WA4"/>
<dbReference type="Proteomes" id="UP000002494">
    <property type="component" value="Unplaced"/>
</dbReference>
<dbReference type="GO" id="GO:0005737">
    <property type="term" value="C:cytoplasm"/>
    <property type="evidence" value="ECO:0000318"/>
    <property type="project" value="GO_Central"/>
</dbReference>
<dbReference type="GO" id="GO:0005634">
    <property type="term" value="C:nucleus"/>
    <property type="evidence" value="ECO:0000250"/>
    <property type="project" value="UniProtKB"/>
</dbReference>
<dbReference type="GO" id="GO:0003730">
    <property type="term" value="F:mRNA 3'-UTR binding"/>
    <property type="evidence" value="ECO:0000266"/>
    <property type="project" value="RGD"/>
</dbReference>
<dbReference type="GO" id="GO:0003729">
    <property type="term" value="F:mRNA binding"/>
    <property type="evidence" value="ECO:0000250"/>
    <property type="project" value="UniProtKB"/>
</dbReference>
<dbReference type="GO" id="GO:0003723">
    <property type="term" value="F:RNA binding"/>
    <property type="evidence" value="ECO:0000250"/>
    <property type="project" value="UniProtKB"/>
</dbReference>
<dbReference type="GO" id="GO:1990825">
    <property type="term" value="F:sequence-specific mRNA binding"/>
    <property type="evidence" value="ECO:0000250"/>
    <property type="project" value="UniProtKB"/>
</dbReference>
<dbReference type="GO" id="GO:0000398">
    <property type="term" value="P:mRNA splicing, via spliceosome"/>
    <property type="evidence" value="ECO:0000266"/>
    <property type="project" value="RGD"/>
</dbReference>
<dbReference type="GO" id="GO:0120163">
    <property type="term" value="P:negative regulation of cold-induced thermogenesis"/>
    <property type="evidence" value="ECO:0000250"/>
    <property type="project" value="YuBioLab"/>
</dbReference>
<dbReference type="GO" id="GO:0000381">
    <property type="term" value="P:regulation of alternative mRNA splicing, via spliceosome"/>
    <property type="evidence" value="ECO:0000250"/>
    <property type="project" value="UniProtKB"/>
</dbReference>
<dbReference type="GO" id="GO:0050684">
    <property type="term" value="P:regulation of mRNA processing"/>
    <property type="evidence" value="ECO:0000315"/>
    <property type="project" value="RGD"/>
</dbReference>
<dbReference type="GO" id="GO:0051252">
    <property type="term" value="P:regulation of RNA metabolic process"/>
    <property type="evidence" value="ECO:0000266"/>
    <property type="project" value="RGD"/>
</dbReference>
<dbReference type="GO" id="GO:0021510">
    <property type="term" value="P:spinal cord development"/>
    <property type="evidence" value="ECO:0000270"/>
    <property type="project" value="RGD"/>
</dbReference>
<dbReference type="CDD" id="cd22435">
    <property type="entry name" value="KH-I_NOVA_rpt1"/>
    <property type="match status" value="1"/>
</dbReference>
<dbReference type="CDD" id="cd22436">
    <property type="entry name" value="KH-I_NOVA_rpt2"/>
    <property type="match status" value="1"/>
</dbReference>
<dbReference type="CDD" id="cd09031">
    <property type="entry name" value="KH-I_NOVA_rpt3"/>
    <property type="match status" value="1"/>
</dbReference>
<dbReference type="FunFam" id="3.30.1370.10:FF:000019">
    <property type="entry name" value="RNA-binding protein Nova-1 isoform 1"/>
    <property type="match status" value="1"/>
</dbReference>
<dbReference type="FunFam" id="3.30.1370.10:FF:000020">
    <property type="entry name" value="RNA-binding protein Nova-1 isoform 1"/>
    <property type="match status" value="1"/>
</dbReference>
<dbReference type="FunFam" id="3.30.1370.10:FF:000022">
    <property type="entry name" value="RNA-binding protein Nova-1 isoform 1"/>
    <property type="match status" value="1"/>
</dbReference>
<dbReference type="Gene3D" id="3.30.1370.10">
    <property type="entry name" value="K Homology domain, type 1"/>
    <property type="match status" value="3"/>
</dbReference>
<dbReference type="InterPro" id="IPR047275">
    <property type="entry name" value="KH-I_NOVA_rpt1"/>
</dbReference>
<dbReference type="InterPro" id="IPR047276">
    <property type="entry name" value="KH-I_NOVA_rpt2"/>
</dbReference>
<dbReference type="InterPro" id="IPR047274">
    <property type="entry name" value="KH-I_NOVA_rpt3"/>
</dbReference>
<dbReference type="InterPro" id="IPR004087">
    <property type="entry name" value="KH_dom"/>
</dbReference>
<dbReference type="InterPro" id="IPR004088">
    <property type="entry name" value="KH_dom_type_1"/>
</dbReference>
<dbReference type="InterPro" id="IPR036612">
    <property type="entry name" value="KH_dom_type_1_sf"/>
</dbReference>
<dbReference type="PANTHER" id="PTHR10288">
    <property type="entry name" value="KH DOMAIN CONTAINING RNA BINDING PROTEIN"/>
    <property type="match status" value="1"/>
</dbReference>
<dbReference type="Pfam" id="PF00013">
    <property type="entry name" value="KH_1"/>
    <property type="match status" value="3"/>
</dbReference>
<dbReference type="SMART" id="SM00322">
    <property type="entry name" value="KH"/>
    <property type="match status" value="3"/>
</dbReference>
<dbReference type="SUPFAM" id="SSF54791">
    <property type="entry name" value="Eukaryotic type KH-domain (KH-domain type I)"/>
    <property type="match status" value="3"/>
</dbReference>
<dbReference type="PROSITE" id="PS50084">
    <property type="entry name" value="KH_TYPE_1"/>
    <property type="match status" value="3"/>
</dbReference>
<accession>Q80WA4</accession>